<evidence type="ECO:0000255" key="1">
    <source>
        <dbReference type="HAMAP-Rule" id="MF_01371"/>
    </source>
</evidence>
<evidence type="ECO:0000305" key="2"/>
<gene>
    <name evidence="1" type="primary">rpmD</name>
    <name type="ordered locus">ABSDF0441</name>
</gene>
<keyword id="KW-0687">Ribonucleoprotein</keyword>
<keyword id="KW-0689">Ribosomal protein</keyword>
<sequence>MKTIKVTQTKSSSHRLKNHKLCLQGLGLRRIGHTVEVQDTPSNRGMINKVYYMVSVEE</sequence>
<reference key="1">
    <citation type="journal article" date="2008" name="PLoS ONE">
        <title>Comparative analysis of Acinetobacters: three genomes for three lifestyles.</title>
        <authorList>
            <person name="Vallenet D."/>
            <person name="Nordmann P."/>
            <person name="Barbe V."/>
            <person name="Poirel L."/>
            <person name="Mangenot S."/>
            <person name="Bataille E."/>
            <person name="Dossat C."/>
            <person name="Gas S."/>
            <person name="Kreimeyer A."/>
            <person name="Lenoble P."/>
            <person name="Oztas S."/>
            <person name="Poulain J."/>
            <person name="Segurens B."/>
            <person name="Robert C."/>
            <person name="Abergel C."/>
            <person name="Claverie J.-M."/>
            <person name="Raoult D."/>
            <person name="Medigue C."/>
            <person name="Weissenbach J."/>
            <person name="Cruveiller S."/>
        </authorList>
    </citation>
    <scope>NUCLEOTIDE SEQUENCE [LARGE SCALE GENOMIC DNA]</scope>
    <source>
        <strain>SDF</strain>
    </source>
</reference>
<protein>
    <recommendedName>
        <fullName evidence="1">Large ribosomal subunit protein uL30</fullName>
    </recommendedName>
    <alternativeName>
        <fullName evidence="2">50S ribosomal protein L30</fullName>
    </alternativeName>
</protein>
<accession>B0VQT6</accession>
<name>RL30_ACIBS</name>
<comment type="subunit">
    <text evidence="1">Part of the 50S ribosomal subunit.</text>
</comment>
<comment type="similarity">
    <text evidence="1">Belongs to the universal ribosomal protein uL30 family.</text>
</comment>
<proteinExistence type="inferred from homology"/>
<organism>
    <name type="scientific">Acinetobacter baumannii (strain SDF)</name>
    <dbReference type="NCBI Taxonomy" id="509170"/>
    <lineage>
        <taxon>Bacteria</taxon>
        <taxon>Pseudomonadati</taxon>
        <taxon>Pseudomonadota</taxon>
        <taxon>Gammaproteobacteria</taxon>
        <taxon>Moraxellales</taxon>
        <taxon>Moraxellaceae</taxon>
        <taxon>Acinetobacter</taxon>
        <taxon>Acinetobacter calcoaceticus/baumannii complex</taxon>
    </lineage>
</organism>
<feature type="chain" id="PRO_1000144638" description="Large ribosomal subunit protein uL30">
    <location>
        <begin position="1"/>
        <end position="58"/>
    </location>
</feature>
<dbReference type="EMBL" id="CU468230">
    <property type="protein sequence ID" value="CAO99832.1"/>
    <property type="molecule type" value="Genomic_DNA"/>
</dbReference>
<dbReference type="SMR" id="B0VQT6"/>
<dbReference type="KEGG" id="abm:ABSDF0441"/>
<dbReference type="HOGENOM" id="CLU_131047_1_4_6"/>
<dbReference type="Proteomes" id="UP000001741">
    <property type="component" value="Chromosome"/>
</dbReference>
<dbReference type="GO" id="GO:0022625">
    <property type="term" value="C:cytosolic large ribosomal subunit"/>
    <property type="evidence" value="ECO:0007669"/>
    <property type="project" value="TreeGrafter"/>
</dbReference>
<dbReference type="GO" id="GO:0003735">
    <property type="term" value="F:structural constituent of ribosome"/>
    <property type="evidence" value="ECO:0007669"/>
    <property type="project" value="InterPro"/>
</dbReference>
<dbReference type="GO" id="GO:0006412">
    <property type="term" value="P:translation"/>
    <property type="evidence" value="ECO:0007669"/>
    <property type="project" value="UniProtKB-UniRule"/>
</dbReference>
<dbReference type="CDD" id="cd01658">
    <property type="entry name" value="Ribosomal_L30"/>
    <property type="match status" value="1"/>
</dbReference>
<dbReference type="FunFam" id="3.30.1390.20:FF:000001">
    <property type="entry name" value="50S ribosomal protein L30"/>
    <property type="match status" value="1"/>
</dbReference>
<dbReference type="Gene3D" id="3.30.1390.20">
    <property type="entry name" value="Ribosomal protein L30, ferredoxin-like fold domain"/>
    <property type="match status" value="1"/>
</dbReference>
<dbReference type="HAMAP" id="MF_01371_B">
    <property type="entry name" value="Ribosomal_uL30_B"/>
    <property type="match status" value="1"/>
</dbReference>
<dbReference type="InterPro" id="IPR036919">
    <property type="entry name" value="Ribo_uL30_ferredoxin-like_sf"/>
</dbReference>
<dbReference type="InterPro" id="IPR005996">
    <property type="entry name" value="Ribosomal_uL30_bac-type"/>
</dbReference>
<dbReference type="InterPro" id="IPR016082">
    <property type="entry name" value="Ribosomal_uL30_ferredoxin-like"/>
</dbReference>
<dbReference type="NCBIfam" id="TIGR01308">
    <property type="entry name" value="rpmD_bact"/>
    <property type="match status" value="1"/>
</dbReference>
<dbReference type="PANTHER" id="PTHR15892:SF2">
    <property type="entry name" value="LARGE RIBOSOMAL SUBUNIT PROTEIN UL30M"/>
    <property type="match status" value="1"/>
</dbReference>
<dbReference type="PANTHER" id="PTHR15892">
    <property type="entry name" value="MITOCHONDRIAL RIBOSOMAL PROTEIN L30"/>
    <property type="match status" value="1"/>
</dbReference>
<dbReference type="Pfam" id="PF00327">
    <property type="entry name" value="Ribosomal_L30"/>
    <property type="match status" value="1"/>
</dbReference>
<dbReference type="PIRSF" id="PIRSF002211">
    <property type="entry name" value="Ribosomal_L30_bac-type"/>
    <property type="match status" value="1"/>
</dbReference>
<dbReference type="SUPFAM" id="SSF55129">
    <property type="entry name" value="Ribosomal protein L30p/L7e"/>
    <property type="match status" value="1"/>
</dbReference>